<proteinExistence type="evidence at protein level"/>
<keyword id="KW-0002">3D-structure</keyword>
<keyword id="KW-0597">Phosphoprotein</keyword>
<keyword id="KW-1267">Proteomics identification</keyword>
<keyword id="KW-1185">Reference proteome</keyword>
<name>LIN52_HUMAN</name>
<gene>
    <name type="primary">LIN52</name>
    <name type="synonym">C14orf46</name>
</gene>
<reference key="1">
    <citation type="journal article" date="2004" name="Genome Res.">
        <title>The status, quality, and expansion of the NIH full-length cDNA project: the Mammalian Gene Collection (MGC).</title>
        <authorList>
            <consortium name="The MGC Project Team"/>
        </authorList>
    </citation>
    <scope>NUCLEOTIDE SEQUENCE [LARGE SCALE MRNA]</scope>
    <source>
        <tissue>Brain</tissue>
    </source>
</reference>
<reference key="2">
    <citation type="journal article" date="2007" name="Cell Cycle">
        <title>LINC, a human complex that is related to pRB-containing complexes in invertebrates regulates the expression of G2/M genes.</title>
        <authorList>
            <person name="Schmit F."/>
            <person name="Korenjak M."/>
            <person name="Mannefeld M."/>
            <person name="Schmitt K."/>
            <person name="Franke C."/>
            <person name="von Eyss B."/>
            <person name="Gagrica S."/>
            <person name="Haenel F."/>
            <person name="Brehm A."/>
            <person name="Gaubatz S."/>
        </authorList>
    </citation>
    <scope>IDENTIFICATION IN THE DREAM COMPLEX</scope>
</reference>
<reference key="3">
    <citation type="journal article" date="2007" name="Mol. Cell">
        <title>Evolutionarily conserved multisubunit RBL2/p130 and E2F4 protein complex represses human cell cycle-dependent genes in quiescence.</title>
        <authorList>
            <person name="Litovchick L."/>
            <person name="Sadasivam S."/>
            <person name="Florens L."/>
            <person name="Zhu X."/>
            <person name="Swanson S.K."/>
            <person name="Velmurugan S."/>
            <person name="Chen R."/>
            <person name="Washburn M.P."/>
            <person name="Liu X.S."/>
            <person name="DeCaprio J.A."/>
        </authorList>
    </citation>
    <scope>IDENTIFICATION IN THE DREAM COMPLEX</scope>
</reference>
<reference key="4">
    <citation type="journal article" date="2009" name="Anal. Chem.">
        <title>Lys-N and trypsin cover complementary parts of the phosphoproteome in a refined SCX-based approach.</title>
        <authorList>
            <person name="Gauci S."/>
            <person name="Helbig A.O."/>
            <person name="Slijper M."/>
            <person name="Krijgsveld J."/>
            <person name="Heck A.J."/>
            <person name="Mohammed S."/>
        </authorList>
    </citation>
    <scope>IDENTIFICATION BY MASS SPECTROMETRY [LARGE SCALE ANALYSIS]</scope>
</reference>
<reference key="5">
    <citation type="journal article" date="2010" name="Sci. Signal.">
        <title>Quantitative phosphoproteomics reveals widespread full phosphorylation site occupancy during mitosis.</title>
        <authorList>
            <person name="Olsen J.V."/>
            <person name="Vermeulen M."/>
            <person name="Santamaria A."/>
            <person name="Kumar C."/>
            <person name="Miller M.L."/>
            <person name="Jensen L.J."/>
            <person name="Gnad F."/>
            <person name="Cox J."/>
            <person name="Jensen T.S."/>
            <person name="Nigg E.A."/>
            <person name="Brunak S."/>
            <person name="Mann M."/>
        </authorList>
    </citation>
    <scope>PHOSPHORYLATION [LARGE SCALE ANALYSIS] AT SER-28</scope>
    <scope>IDENTIFICATION BY MASS SPECTROMETRY [LARGE SCALE ANALYSIS]</scope>
    <source>
        <tissue>Cervix carcinoma</tissue>
    </source>
</reference>
<reference key="6">
    <citation type="journal article" date="2013" name="J. Proteome Res.">
        <title>Toward a comprehensive characterization of a human cancer cell phosphoproteome.</title>
        <authorList>
            <person name="Zhou H."/>
            <person name="Di Palma S."/>
            <person name="Preisinger C."/>
            <person name="Peng M."/>
            <person name="Polat A.N."/>
            <person name="Heck A.J."/>
            <person name="Mohammed S."/>
        </authorList>
    </citation>
    <scope>PHOSPHORYLATION [LARGE SCALE ANALYSIS] AT SER-53</scope>
    <scope>IDENTIFICATION BY MASS SPECTROMETRY [LARGE SCALE ANALYSIS]</scope>
    <source>
        <tissue>Cervix carcinoma</tissue>
        <tissue>Erythroleukemia</tissue>
    </source>
</reference>
<reference key="7">
    <citation type="journal article" date="2014" name="J. Proteomics">
        <title>An enzyme assisted RP-RPLC approach for in-depth analysis of human liver phosphoproteome.</title>
        <authorList>
            <person name="Bian Y."/>
            <person name="Song C."/>
            <person name="Cheng K."/>
            <person name="Dong M."/>
            <person name="Wang F."/>
            <person name="Huang J."/>
            <person name="Sun D."/>
            <person name="Wang L."/>
            <person name="Ye M."/>
            <person name="Zou H."/>
        </authorList>
    </citation>
    <scope>PHOSPHORYLATION [LARGE SCALE ANALYSIS] AT SER-28</scope>
    <scope>IDENTIFICATION BY MASS SPECTROMETRY [LARGE SCALE ANALYSIS]</scope>
    <source>
        <tissue>Liver</tissue>
    </source>
</reference>
<comment type="subunit">
    <text evidence="1 2">Component of the DREAM complex (also named LINC complex) at least composed of E2F4, E2F5, LIN9, LIN37, LIN52, LIN54, MYBL1, MYBL2, RBL1, RBL2, RBBP4, TFDP1 and TFDP2. The complex exists in quiescent cells where it represses cell cycle-dependent genes. It dissociates in S phase when LIN9, LIN37, LIN52 and LIN54 form a subcomplex that binds to MYBL2.</text>
</comment>
<comment type="interaction">
    <interactant intactId="EBI-1389456">
        <id>Q52LA3</id>
    </interactant>
    <interactant intactId="EBI-6255981">
        <id>Q7L775</id>
        <label>EPM2AIP1</label>
    </interactant>
    <organismsDiffer>false</organismsDiffer>
    <experiments>3</experiments>
</comment>
<comment type="interaction">
    <interactant intactId="EBI-1389456">
        <id>Q52LA3</id>
    </interactant>
    <interactant intactId="EBI-1045155">
        <id>P43360</id>
        <label>MAGEA6</label>
    </interactant>
    <organismsDiffer>false</organismsDiffer>
    <experiments>3</experiments>
</comment>
<comment type="similarity">
    <text evidence="3">Belongs to the lin-52 family.</text>
</comment>
<protein>
    <recommendedName>
        <fullName>Protein lin-52 homolog</fullName>
    </recommendedName>
</protein>
<feature type="chain" id="PRO_0000252154" description="Protein lin-52 homolog">
    <location>
        <begin position="1"/>
        <end position="116"/>
    </location>
</feature>
<feature type="modified residue" description="Phosphoserine" evidence="4 6">
    <location>
        <position position="28"/>
    </location>
</feature>
<feature type="modified residue" description="Phosphoserine" evidence="5">
    <location>
        <position position="53"/>
    </location>
</feature>
<feature type="helix" evidence="7">
    <location>
        <begin position="28"/>
        <end position="31"/>
    </location>
</feature>
<feature type="helix" evidence="8">
    <location>
        <begin position="64"/>
        <end position="73"/>
    </location>
</feature>
<feature type="helix" evidence="8">
    <location>
        <begin position="77"/>
        <end position="106"/>
    </location>
</feature>
<feature type="turn" evidence="8">
    <location>
        <begin position="107"/>
        <end position="111"/>
    </location>
</feature>
<sequence>MGWKMASPTDGTDLEASLLSFEKLDRASPDLWPEQLPGVAEFAASFKSPITSSPPKWMAEIERDDIDMLKELGSLTTANLMEKVRGLQNLAYQLGLDESREMTRGKFLNILEKPKK</sequence>
<accession>Q52LA3</accession>
<dbReference type="EMBL" id="BC094003">
    <property type="protein sequence ID" value="AAH94003.1"/>
    <property type="molecule type" value="mRNA"/>
</dbReference>
<dbReference type="EMBL" id="BC094005">
    <property type="protein sequence ID" value="AAH94005.1"/>
    <property type="molecule type" value="mRNA"/>
</dbReference>
<dbReference type="RefSeq" id="NP_001019845.1">
    <property type="nucleotide sequence ID" value="NM_001024674.2"/>
</dbReference>
<dbReference type="PDB" id="4YOO">
    <property type="method" value="X-ray"/>
    <property type="resolution" value="2.40 A"/>
    <property type="chains" value="X=15-34"/>
</dbReference>
<dbReference type="PDB" id="6C48">
    <property type="method" value="X-ray"/>
    <property type="resolution" value="2.32 A"/>
    <property type="chains" value="B/E=52-116"/>
</dbReference>
<dbReference type="PDBsum" id="4YOO"/>
<dbReference type="PDBsum" id="6C48"/>
<dbReference type="SMR" id="Q52LA3"/>
<dbReference type="BioGRID" id="124874">
    <property type="interactions" value="58"/>
</dbReference>
<dbReference type="ComplexPortal" id="CPX-2366">
    <property type="entry name" value="Myb-MuvB transcriptional activation complex"/>
</dbReference>
<dbReference type="ComplexPortal" id="CPX-2368">
    <property type="entry name" value="DREAM transcriptional repressor complex, RBL1 variant"/>
</dbReference>
<dbReference type="ComplexPortal" id="CPX-7461">
    <property type="entry name" value="DREAM transcriptional repressor complex, RBL2 variant"/>
</dbReference>
<dbReference type="ComplexPortal" id="CPX-7462">
    <property type="entry name" value="Myb-MuvB-FOXM1 transcriptional activation complex"/>
</dbReference>
<dbReference type="CORUM" id="Q52LA3"/>
<dbReference type="FunCoup" id="Q52LA3">
    <property type="interactions" value="1087"/>
</dbReference>
<dbReference type="IntAct" id="Q52LA3">
    <property type="interactions" value="17"/>
</dbReference>
<dbReference type="MINT" id="Q52LA3"/>
<dbReference type="STRING" id="9606.ENSP00000451812"/>
<dbReference type="iPTMnet" id="Q52LA3"/>
<dbReference type="PhosphoSitePlus" id="Q52LA3"/>
<dbReference type="BioMuta" id="LIN52"/>
<dbReference type="DMDM" id="74754720"/>
<dbReference type="jPOST" id="Q52LA3"/>
<dbReference type="MassIVE" id="Q52LA3"/>
<dbReference type="PaxDb" id="9606-ENSP00000451812"/>
<dbReference type="ProteomicsDB" id="62420"/>
<dbReference type="Pumba" id="Q52LA3"/>
<dbReference type="Antibodypedia" id="8">
    <property type="antibodies" value="65 antibodies from 14 providers"/>
</dbReference>
<dbReference type="DNASU" id="91750"/>
<dbReference type="GeneID" id="91750"/>
<dbReference type="KEGG" id="hsa:91750"/>
<dbReference type="UCSC" id="uc001xpp.3">
    <property type="organism name" value="human"/>
</dbReference>
<dbReference type="AGR" id="HGNC:19856"/>
<dbReference type="CTD" id="91750"/>
<dbReference type="DisGeNET" id="91750"/>
<dbReference type="GeneCards" id="LIN52"/>
<dbReference type="HGNC" id="HGNC:19856">
    <property type="gene designation" value="LIN52"/>
</dbReference>
<dbReference type="neXtProt" id="NX_Q52LA3"/>
<dbReference type="PharmGKB" id="PA162394039"/>
<dbReference type="VEuPathDB" id="HostDB:ENSG00000205659"/>
<dbReference type="eggNOG" id="KOG4402">
    <property type="taxonomic scope" value="Eukaryota"/>
</dbReference>
<dbReference type="HOGENOM" id="CLU_143062_1_0_1"/>
<dbReference type="InParanoid" id="Q52LA3"/>
<dbReference type="OMA" id="NVQNTAY"/>
<dbReference type="OrthoDB" id="5834362at2759"/>
<dbReference type="PAN-GO" id="Q52LA3">
    <property type="GO annotations" value="0 GO annotations based on evolutionary models"/>
</dbReference>
<dbReference type="PhylomeDB" id="Q52LA3"/>
<dbReference type="TreeFam" id="TF320091"/>
<dbReference type="PathwayCommons" id="Q52LA3"/>
<dbReference type="Reactome" id="R-HSA-1362277">
    <property type="pathway name" value="Transcription of E2F targets under negative control by DREAM complex"/>
</dbReference>
<dbReference type="Reactome" id="R-HSA-1362300">
    <property type="pathway name" value="Transcription of E2F targets under negative control by p107 (RBL1) and p130 (RBL2) in complex with HDAC1"/>
</dbReference>
<dbReference type="Reactome" id="R-HSA-1538133">
    <property type="pathway name" value="G0 and Early G1"/>
</dbReference>
<dbReference type="Reactome" id="R-HSA-156711">
    <property type="pathway name" value="Polo-like kinase mediated events"/>
</dbReference>
<dbReference type="Reactome" id="R-HSA-69202">
    <property type="pathway name" value="Cyclin E associated events during G1/S transition"/>
</dbReference>
<dbReference type="Reactome" id="R-HSA-69205">
    <property type="pathway name" value="G1/S-Specific Transcription"/>
</dbReference>
<dbReference type="Reactome" id="R-HSA-69656">
    <property type="pathway name" value="Cyclin A:Cdk2-associated events at S phase entry"/>
</dbReference>
<dbReference type="SignaLink" id="Q52LA3"/>
<dbReference type="SIGNOR" id="Q52LA3"/>
<dbReference type="BioGRID-ORCS" id="91750">
    <property type="hits" value="509 hits in 1159 CRISPR screens"/>
</dbReference>
<dbReference type="ChiTaRS" id="LIN52">
    <property type="organism name" value="human"/>
</dbReference>
<dbReference type="GenomeRNAi" id="91750"/>
<dbReference type="Pharos" id="Q52LA3">
    <property type="development level" value="Tbio"/>
</dbReference>
<dbReference type="PRO" id="PR:Q52LA3"/>
<dbReference type="Proteomes" id="UP000005640">
    <property type="component" value="Chromosome 14"/>
</dbReference>
<dbReference type="RNAct" id="Q52LA3">
    <property type="molecule type" value="protein"/>
</dbReference>
<dbReference type="Bgee" id="ENSG00000205659">
    <property type="expression patterns" value="Expressed in secondary oocyte and 200 other cell types or tissues"/>
</dbReference>
<dbReference type="ExpressionAtlas" id="Q52LA3">
    <property type="expression patterns" value="baseline and differential"/>
</dbReference>
<dbReference type="GO" id="GO:0070176">
    <property type="term" value="C:DRM complex"/>
    <property type="evidence" value="ECO:0007669"/>
    <property type="project" value="InterPro"/>
</dbReference>
<dbReference type="GO" id="GO:0005654">
    <property type="term" value="C:nucleoplasm"/>
    <property type="evidence" value="ECO:0000304"/>
    <property type="project" value="Reactome"/>
</dbReference>
<dbReference type="GO" id="GO:0006355">
    <property type="term" value="P:regulation of DNA-templated transcription"/>
    <property type="evidence" value="ECO:0007669"/>
    <property type="project" value="InterPro"/>
</dbReference>
<dbReference type="InterPro" id="IPR018737">
    <property type="entry name" value="DREAM_LIN52"/>
</dbReference>
<dbReference type="PANTHER" id="PTHR31489">
    <property type="entry name" value="LIN52 FAMILY MEMBER"/>
    <property type="match status" value="1"/>
</dbReference>
<dbReference type="PANTHER" id="PTHR31489:SF2">
    <property type="entry name" value="PROTEIN LIN-52 HOMOLOG"/>
    <property type="match status" value="1"/>
</dbReference>
<dbReference type="Pfam" id="PF10044">
    <property type="entry name" value="LIN52"/>
    <property type="match status" value="1"/>
</dbReference>
<organism>
    <name type="scientific">Homo sapiens</name>
    <name type="common">Human</name>
    <dbReference type="NCBI Taxonomy" id="9606"/>
    <lineage>
        <taxon>Eukaryota</taxon>
        <taxon>Metazoa</taxon>
        <taxon>Chordata</taxon>
        <taxon>Craniata</taxon>
        <taxon>Vertebrata</taxon>
        <taxon>Euteleostomi</taxon>
        <taxon>Mammalia</taxon>
        <taxon>Eutheria</taxon>
        <taxon>Euarchontoglires</taxon>
        <taxon>Primates</taxon>
        <taxon>Haplorrhini</taxon>
        <taxon>Catarrhini</taxon>
        <taxon>Hominidae</taxon>
        <taxon>Homo</taxon>
    </lineage>
</organism>
<evidence type="ECO:0000269" key="1">
    <source>
    </source>
</evidence>
<evidence type="ECO:0000269" key="2">
    <source>
    </source>
</evidence>
<evidence type="ECO:0000305" key="3"/>
<evidence type="ECO:0007744" key="4">
    <source>
    </source>
</evidence>
<evidence type="ECO:0007744" key="5">
    <source>
    </source>
</evidence>
<evidence type="ECO:0007744" key="6">
    <source>
    </source>
</evidence>
<evidence type="ECO:0007829" key="7">
    <source>
        <dbReference type="PDB" id="4YOO"/>
    </source>
</evidence>
<evidence type="ECO:0007829" key="8">
    <source>
        <dbReference type="PDB" id="6C48"/>
    </source>
</evidence>